<sequence>MAGPFSRLLSARPGLRLLALAGAGSLAAGFLLRSEPVRAASERRRLYPPSAEYPDLRKHNNCMASHLTPAVYARLCDKTTPTGWTLDQCIQTGVDNPGHPFIKTVGMVAGDEETYEVFAELFDPVIQERHNGYDPRTMKHTTDLDASKIRSGYFDERYVLSSRVRTGRSIRGLSLPPACTRAERREVERVVVDALSGLKGDLAGRYYRLSEMTEAEQQQLIDDHFLFDKPVSPLLTAAGMARDWPDARGIWHNNEKSFLIWVNEEDHTRVISMEKGGNMKKVFERFCRGLKEVERLIQERGWEFMWNERLGYILTCPSNLGTGLRAGVHIKLPLLSKDSRFPKILENLRLQKRGTGGVDTAATGSVFDISNLDRLGKSEVELVQLVIDGVNFLIDCERRLERGQDIRIPPPLPNKH</sequence>
<evidence type="ECO:0000250" key="1"/>
<evidence type="ECO:0000250" key="2">
    <source>
        <dbReference type="UniProtKB" id="P00564"/>
    </source>
</evidence>
<evidence type="ECO:0000250" key="3">
    <source>
        <dbReference type="UniProtKB" id="P07310"/>
    </source>
</evidence>
<evidence type="ECO:0000250" key="4">
    <source>
        <dbReference type="UniProtKB" id="P25809"/>
    </source>
</evidence>
<evidence type="ECO:0000250" key="5">
    <source>
        <dbReference type="UniProtKB" id="P30275"/>
    </source>
</evidence>
<evidence type="ECO:0000255" key="6">
    <source>
        <dbReference type="PROSITE-ProRule" id="PRU00842"/>
    </source>
</evidence>
<evidence type="ECO:0000255" key="7">
    <source>
        <dbReference type="PROSITE-ProRule" id="PRU00843"/>
    </source>
</evidence>
<evidence type="ECO:0000255" key="8">
    <source>
        <dbReference type="PROSITE-ProRule" id="PRU10029"/>
    </source>
</evidence>
<evidence type="ECO:0007829" key="9">
    <source>
        <dbReference type="PDB" id="7U5I"/>
    </source>
</evidence>
<reference key="1">
    <citation type="journal article" date="1999" name="Exp. Eye Res.">
        <title>Initiating ocular proteomics for cataloging bovine retinal proteins: microanalytical techniques permit the identification of proteins derived from a novel photoreceptor preparation.</title>
        <authorList>
            <person name="Komori N."/>
            <person name="Usukura J."/>
            <person name="Jackson K.W."/>
            <person name="Tobin S.L."/>
            <person name="Matsumoto H."/>
            <person name="Nishizawa Y."/>
        </authorList>
    </citation>
    <scope>NUCLEOTIDE SEQUENCE [MRNA]</scope>
    <source>
        <tissue>Retina</tissue>
    </source>
</reference>
<reference key="2">
    <citation type="submission" date="2005-08" db="EMBL/GenBank/DDBJ databases">
        <authorList>
            <consortium name="NIH - Mammalian Gene Collection (MGC) project"/>
        </authorList>
    </citation>
    <scope>NUCLEOTIDE SEQUENCE [LARGE SCALE MRNA]</scope>
    <source>
        <strain>Crossbred X Angus</strain>
        <tissue>Ileum</tissue>
    </source>
</reference>
<keyword id="KW-0002">3D-structure</keyword>
<keyword id="KW-0067">ATP-binding</keyword>
<keyword id="KW-0418">Kinase</keyword>
<keyword id="KW-0472">Membrane</keyword>
<keyword id="KW-0496">Mitochondrion</keyword>
<keyword id="KW-0999">Mitochondrion inner membrane</keyword>
<keyword id="KW-0547">Nucleotide-binding</keyword>
<keyword id="KW-0597">Phosphoprotein</keyword>
<keyword id="KW-1185">Reference proteome</keyword>
<keyword id="KW-0808">Transferase</keyword>
<keyword id="KW-0809">Transit peptide</keyword>
<accession>Q9TTK8</accession>
<accession>Q3ZCF8</accession>
<dbReference type="EC" id="2.7.3.2"/>
<dbReference type="EMBL" id="AB003307">
    <property type="protein sequence ID" value="BAA88431.1"/>
    <property type="molecule type" value="mRNA"/>
</dbReference>
<dbReference type="EMBL" id="BC102422">
    <property type="protein sequence ID" value="AAI02423.1"/>
    <property type="molecule type" value="mRNA"/>
</dbReference>
<dbReference type="RefSeq" id="NP_776700.1">
    <property type="nucleotide sequence ID" value="NM_174275.2"/>
</dbReference>
<dbReference type="RefSeq" id="XP_005222173.1">
    <property type="nucleotide sequence ID" value="XM_005222116.3"/>
</dbReference>
<dbReference type="RefSeq" id="XP_005222174.1">
    <property type="nucleotide sequence ID" value="XM_005222117.3"/>
</dbReference>
<dbReference type="PDB" id="7U5I">
    <property type="method" value="EM"/>
    <property type="resolution" value="3.26 A"/>
    <property type="chains" value="A/B/C/D/E/F/G/H=1-416"/>
</dbReference>
<dbReference type="PDBsum" id="7U5I"/>
<dbReference type="EMDB" id="EMD-26351"/>
<dbReference type="SMR" id="Q9TTK8"/>
<dbReference type="BioGRID" id="159011">
    <property type="interactions" value="1"/>
</dbReference>
<dbReference type="FunCoup" id="Q9TTK8">
    <property type="interactions" value="276"/>
</dbReference>
<dbReference type="STRING" id="9913.ENSBTAP00000009871"/>
<dbReference type="PaxDb" id="9913-ENSBTAP00000009871"/>
<dbReference type="PeptideAtlas" id="Q9TTK8"/>
<dbReference type="GeneID" id="281692"/>
<dbReference type="KEGG" id="bta:281692"/>
<dbReference type="CTD" id="548596"/>
<dbReference type="VEuPathDB" id="HostDB:ENSBTAG00000007502"/>
<dbReference type="eggNOG" id="KOG3581">
    <property type="taxonomic scope" value="Eukaryota"/>
</dbReference>
<dbReference type="HOGENOM" id="CLU_019868_4_2_1"/>
<dbReference type="InParanoid" id="Q9TTK8"/>
<dbReference type="OMA" id="NCMASAM"/>
<dbReference type="OrthoDB" id="430219at2759"/>
<dbReference type="TreeFam" id="TF314214"/>
<dbReference type="Reactome" id="R-BTA-71288">
    <property type="pathway name" value="Creatine metabolism"/>
</dbReference>
<dbReference type="Proteomes" id="UP000009136">
    <property type="component" value="Chromosome 21"/>
</dbReference>
<dbReference type="Bgee" id="ENSBTAG00000007502">
    <property type="expression patterns" value="Expressed in abomasum and 88 other cell types or tissues"/>
</dbReference>
<dbReference type="GO" id="GO:0005743">
    <property type="term" value="C:mitochondrial inner membrane"/>
    <property type="evidence" value="ECO:0007669"/>
    <property type="project" value="UniProtKB-SubCell"/>
</dbReference>
<dbReference type="GO" id="GO:0005739">
    <property type="term" value="C:mitochondrion"/>
    <property type="evidence" value="ECO:0000318"/>
    <property type="project" value="GO_Central"/>
</dbReference>
<dbReference type="GO" id="GO:0005524">
    <property type="term" value="F:ATP binding"/>
    <property type="evidence" value="ECO:0007669"/>
    <property type="project" value="UniProtKB-KW"/>
</dbReference>
<dbReference type="GO" id="GO:0004111">
    <property type="term" value="F:creatine kinase activity"/>
    <property type="evidence" value="ECO:0000318"/>
    <property type="project" value="GO_Central"/>
</dbReference>
<dbReference type="GO" id="GO:0043066">
    <property type="term" value="P:negative regulation of apoptotic process"/>
    <property type="evidence" value="ECO:0007669"/>
    <property type="project" value="Ensembl"/>
</dbReference>
<dbReference type="GO" id="GO:0046314">
    <property type="term" value="P:phosphocreatine biosynthetic process"/>
    <property type="evidence" value="ECO:0000318"/>
    <property type="project" value="GO_Central"/>
</dbReference>
<dbReference type="CDD" id="cd00716">
    <property type="entry name" value="creatine_kinase_like"/>
    <property type="match status" value="1"/>
</dbReference>
<dbReference type="FunFam" id="3.30.590.10:FF:000002">
    <property type="entry name" value="Creatine kinase S-type, mitochondrial"/>
    <property type="match status" value="1"/>
</dbReference>
<dbReference type="FunFam" id="1.10.135.10:FF:000002">
    <property type="entry name" value="creatine kinase S-type, mitochondrial"/>
    <property type="match status" value="1"/>
</dbReference>
<dbReference type="Gene3D" id="1.10.135.10">
    <property type="entry name" value="ATP:guanido phosphotransferase, N-terminal domain"/>
    <property type="match status" value="1"/>
</dbReference>
<dbReference type="Gene3D" id="3.30.590.10">
    <property type="entry name" value="Glutamine synthetase/guanido kinase, catalytic domain"/>
    <property type="match status" value="1"/>
</dbReference>
<dbReference type="InterPro" id="IPR000749">
    <property type="entry name" value="ATP-guanido_PTrfase"/>
</dbReference>
<dbReference type="InterPro" id="IPR022415">
    <property type="entry name" value="ATP-guanido_PTrfase_AS"/>
</dbReference>
<dbReference type="InterPro" id="IPR022414">
    <property type="entry name" value="ATP-guanido_PTrfase_cat"/>
</dbReference>
<dbReference type="InterPro" id="IPR022413">
    <property type="entry name" value="ATP-guanido_PTrfase_N"/>
</dbReference>
<dbReference type="InterPro" id="IPR036802">
    <property type="entry name" value="ATP-guanido_PTrfase_N_sf"/>
</dbReference>
<dbReference type="InterPro" id="IPR014746">
    <property type="entry name" value="Gln_synth/guanido_kin_cat_dom"/>
</dbReference>
<dbReference type="PANTHER" id="PTHR11547">
    <property type="entry name" value="ARGININE OR CREATINE KINASE"/>
    <property type="match status" value="1"/>
</dbReference>
<dbReference type="PANTHER" id="PTHR11547:SF24">
    <property type="entry name" value="CREATINE KINASE U-TYPE, MITOCHONDRIAL"/>
    <property type="match status" value="1"/>
</dbReference>
<dbReference type="Pfam" id="PF00217">
    <property type="entry name" value="ATP-gua_Ptrans"/>
    <property type="match status" value="1"/>
</dbReference>
<dbReference type="Pfam" id="PF02807">
    <property type="entry name" value="ATP-gua_PtransN"/>
    <property type="match status" value="1"/>
</dbReference>
<dbReference type="SUPFAM" id="SSF55931">
    <property type="entry name" value="Glutamine synthetase/guanido kinase"/>
    <property type="match status" value="1"/>
</dbReference>
<dbReference type="SUPFAM" id="SSF48034">
    <property type="entry name" value="Guanido kinase N-terminal domain"/>
    <property type="match status" value="1"/>
</dbReference>
<dbReference type="PROSITE" id="PS00112">
    <property type="entry name" value="PHOSPHAGEN_KINASE"/>
    <property type="match status" value="1"/>
</dbReference>
<dbReference type="PROSITE" id="PS51510">
    <property type="entry name" value="PHOSPHAGEN_KINASE_C"/>
    <property type="match status" value="1"/>
</dbReference>
<dbReference type="PROSITE" id="PS51509">
    <property type="entry name" value="PHOSPHAGEN_KINASE_N"/>
    <property type="match status" value="1"/>
</dbReference>
<feature type="transit peptide" description="Mitochondrion" evidence="1">
    <location>
        <begin position="1"/>
        <end position="39"/>
    </location>
</feature>
<feature type="chain" id="PRO_0000016589" description="Creatine kinase U-type, mitochondrial">
    <location>
        <begin position="40"/>
        <end position="416"/>
    </location>
</feature>
<feature type="domain" description="Phosphagen kinase N-terminal" evidence="6">
    <location>
        <begin position="45"/>
        <end position="131"/>
    </location>
</feature>
<feature type="domain" description="Phosphagen kinase C-terminal" evidence="7">
    <location>
        <begin position="158"/>
        <end position="400"/>
    </location>
</feature>
<feature type="region of interest" description="Cardiolipin-binding" evidence="1">
    <location>
        <begin position="40"/>
        <end position="64"/>
    </location>
</feature>
<feature type="binding site" evidence="7">
    <location>
        <begin position="161"/>
        <end position="165"/>
    </location>
    <ligand>
        <name>ATP</name>
        <dbReference type="ChEBI" id="CHEBI:30616"/>
    </ligand>
</feature>
<feature type="binding site" evidence="7">
    <location>
        <position position="224"/>
    </location>
    <ligand>
        <name>ATP</name>
        <dbReference type="ChEBI" id="CHEBI:30616"/>
    </ligand>
</feature>
<feature type="binding site" evidence="7">
    <location>
        <position position="269"/>
    </location>
    <ligand>
        <name>ATP</name>
        <dbReference type="ChEBI" id="CHEBI:30616"/>
    </ligand>
</feature>
<feature type="binding site" evidence="7">
    <location>
        <position position="325"/>
    </location>
    <ligand>
        <name>ATP</name>
        <dbReference type="ChEBI" id="CHEBI:30616"/>
    </ligand>
</feature>
<feature type="binding site" evidence="7">
    <location>
        <begin position="353"/>
        <end position="358"/>
    </location>
    <ligand>
        <name>ATP</name>
        <dbReference type="ChEBI" id="CHEBI:30616"/>
    </ligand>
</feature>
<feature type="binding site" evidence="7">
    <location>
        <position position="368"/>
    </location>
    <ligand>
        <name>ATP</name>
        <dbReference type="ChEBI" id="CHEBI:30616"/>
    </ligand>
</feature>
<feature type="modified residue" description="Phosphoserine" evidence="4">
    <location>
        <position position="151"/>
    </location>
</feature>
<feature type="modified residue" description="Phosphoserine" evidence="4">
    <location>
        <position position="196"/>
    </location>
</feature>
<feature type="modified residue" description="Phosphothreonine" evidence="2">
    <location>
        <position position="213"/>
    </location>
</feature>
<feature type="modified residue" description="Phosphoserine" evidence="5">
    <location>
        <position position="232"/>
    </location>
</feature>
<feature type="modified residue" description="Phosphothreonine" evidence="3">
    <location>
        <position position="355"/>
    </location>
</feature>
<feature type="modified residue" description="Phosphoserine" evidence="5">
    <location>
        <position position="365"/>
    </location>
</feature>
<feature type="helix" evidence="9">
    <location>
        <begin position="49"/>
        <end position="52"/>
    </location>
</feature>
<feature type="helix" evidence="9">
    <location>
        <begin position="62"/>
        <end position="66"/>
    </location>
</feature>
<feature type="helix" evidence="9">
    <location>
        <begin position="69"/>
        <end position="76"/>
    </location>
</feature>
<feature type="helix" evidence="9">
    <location>
        <begin position="86"/>
        <end position="95"/>
    </location>
</feature>
<feature type="helix" evidence="9">
    <location>
        <begin position="114"/>
        <end position="117"/>
    </location>
</feature>
<feature type="helix" evidence="9">
    <location>
        <begin position="119"/>
        <end position="129"/>
    </location>
</feature>
<feature type="turn" evidence="9">
    <location>
        <begin position="130"/>
        <end position="132"/>
    </location>
</feature>
<feature type="turn" evidence="9">
    <location>
        <begin position="135"/>
        <end position="137"/>
    </location>
</feature>
<feature type="turn" evidence="9">
    <location>
        <begin position="156"/>
        <end position="158"/>
    </location>
</feature>
<feature type="strand" evidence="9">
    <location>
        <begin position="159"/>
        <end position="168"/>
    </location>
</feature>
<feature type="turn" evidence="9">
    <location>
        <begin position="176"/>
        <end position="178"/>
    </location>
</feature>
<feature type="helix" evidence="9">
    <location>
        <begin position="181"/>
        <end position="196"/>
    </location>
</feature>
<feature type="strand" evidence="9">
    <location>
        <begin position="204"/>
        <end position="208"/>
    </location>
</feature>
<feature type="helix" evidence="9">
    <location>
        <begin position="214"/>
        <end position="222"/>
    </location>
</feature>
<feature type="helix" evidence="9">
    <location>
        <begin position="233"/>
        <end position="238"/>
    </location>
</feature>
<feature type="turn" evidence="9">
    <location>
        <begin position="239"/>
        <end position="241"/>
    </location>
</feature>
<feature type="strand" evidence="9">
    <location>
        <begin position="242"/>
        <end position="245"/>
    </location>
</feature>
<feature type="strand" evidence="9">
    <location>
        <begin position="249"/>
        <end position="253"/>
    </location>
</feature>
<feature type="strand" evidence="9">
    <location>
        <begin position="258"/>
        <end position="278"/>
    </location>
</feature>
<feature type="helix" evidence="9">
    <location>
        <begin position="279"/>
        <end position="300"/>
    </location>
</feature>
<feature type="turn" evidence="9">
    <location>
        <begin position="308"/>
        <end position="310"/>
    </location>
</feature>
<feature type="strand" evidence="9">
    <location>
        <begin position="327"/>
        <end position="331"/>
    </location>
</feature>
<feature type="helix" evidence="9">
    <location>
        <begin position="333"/>
        <end position="337"/>
    </location>
</feature>
<feature type="helix" evidence="9">
    <location>
        <begin position="341"/>
        <end position="347"/>
    </location>
</feature>
<feature type="strand" evidence="9">
    <location>
        <begin position="350"/>
        <end position="353"/>
    </location>
</feature>
<feature type="strand" evidence="9">
    <location>
        <begin position="366"/>
        <end position="372"/>
    </location>
</feature>
<feature type="strand" evidence="9">
    <location>
        <begin position="374"/>
        <end position="377"/>
    </location>
</feature>
<feature type="helix" evidence="9">
    <location>
        <begin position="379"/>
        <end position="402"/>
    </location>
</feature>
<proteinExistence type="evidence at protein level"/>
<gene>
    <name type="primary">CKMT1</name>
</gene>
<organism>
    <name type="scientific">Bos taurus</name>
    <name type="common">Bovine</name>
    <dbReference type="NCBI Taxonomy" id="9913"/>
    <lineage>
        <taxon>Eukaryota</taxon>
        <taxon>Metazoa</taxon>
        <taxon>Chordata</taxon>
        <taxon>Craniata</taxon>
        <taxon>Vertebrata</taxon>
        <taxon>Euteleostomi</taxon>
        <taxon>Mammalia</taxon>
        <taxon>Eutheria</taxon>
        <taxon>Laurasiatheria</taxon>
        <taxon>Artiodactyla</taxon>
        <taxon>Ruminantia</taxon>
        <taxon>Pecora</taxon>
        <taxon>Bovidae</taxon>
        <taxon>Bovinae</taxon>
        <taxon>Bos</taxon>
    </lineage>
</organism>
<protein>
    <recommendedName>
        <fullName>Creatine kinase U-type, mitochondrial</fullName>
        <ecNumber>2.7.3.2</ecNumber>
    </recommendedName>
    <alternativeName>
        <fullName>Acidic-type mitochondrial creatine kinase</fullName>
        <shortName>Mia-CK</shortName>
    </alternativeName>
    <alternativeName>
        <fullName>Ubiquitous mitochondrial creatine kinase</fullName>
        <shortName>U-MtCK</shortName>
    </alternativeName>
</protein>
<name>KCRU_BOVIN</name>
<comment type="function">
    <text evidence="1">Reversibly catalyzes the transfer of phosphate between ATP and various phosphogens (e.g. creatine phosphate). Creatine kinase isoenzymes play a central role in energy transduction in tissues with large, fluctuating energy demands, such as skeletal muscle, heart, brain and spermatozoa (By similarity).</text>
</comment>
<comment type="catalytic activity">
    <reaction evidence="8">
        <text>creatine + ATP = N-phosphocreatine + ADP + H(+)</text>
        <dbReference type="Rhea" id="RHEA:17157"/>
        <dbReference type="ChEBI" id="CHEBI:15378"/>
        <dbReference type="ChEBI" id="CHEBI:30616"/>
        <dbReference type="ChEBI" id="CHEBI:57947"/>
        <dbReference type="ChEBI" id="CHEBI:58092"/>
        <dbReference type="ChEBI" id="CHEBI:456216"/>
        <dbReference type="EC" id="2.7.3.2"/>
    </reaction>
</comment>
<comment type="subunit">
    <text evidence="1">Exists as an octamer composed of four MTCK homodimers.</text>
</comment>
<comment type="subcellular location">
    <subcellularLocation>
        <location evidence="1">Mitochondrion inner membrane</location>
        <topology evidence="1">Peripheral membrane protein</topology>
        <orientation evidence="1">Intermembrane side</orientation>
    </subcellularLocation>
</comment>
<comment type="miscellaneous">
    <text evidence="1">Mitochondrial creatine kinase binds cardiolipin.</text>
</comment>
<comment type="similarity">
    <text evidence="6 7">Belongs to the ATP:guanido phosphotransferase family.</text>
</comment>